<name>RECO_ECO5E</name>
<proteinExistence type="inferred from homology"/>
<comment type="function">
    <text evidence="1">Involved in DNA repair and RecF pathway recombination.</text>
</comment>
<comment type="subunit">
    <text evidence="1">Monomer.</text>
</comment>
<comment type="similarity">
    <text evidence="1">Belongs to the RecO family.</text>
</comment>
<accession>B5Z139</accession>
<reference key="1">
    <citation type="journal article" date="2011" name="Proc. Natl. Acad. Sci. U.S.A.">
        <title>Genomic anatomy of Escherichia coli O157:H7 outbreaks.</title>
        <authorList>
            <person name="Eppinger M."/>
            <person name="Mammel M.K."/>
            <person name="Leclerc J.E."/>
            <person name="Ravel J."/>
            <person name="Cebula T.A."/>
        </authorList>
    </citation>
    <scope>NUCLEOTIDE SEQUENCE [LARGE SCALE GENOMIC DNA]</scope>
    <source>
        <strain>EC4115 / EHEC</strain>
    </source>
</reference>
<dbReference type="EMBL" id="CP001164">
    <property type="protein sequence ID" value="ACI35805.1"/>
    <property type="molecule type" value="Genomic_DNA"/>
</dbReference>
<dbReference type="RefSeq" id="WP_000399404.1">
    <property type="nucleotide sequence ID" value="NC_011353.1"/>
</dbReference>
<dbReference type="SMR" id="B5Z139"/>
<dbReference type="KEGG" id="ecf:ECH74115_3801"/>
<dbReference type="HOGENOM" id="CLU_066645_1_0_6"/>
<dbReference type="GO" id="GO:0043590">
    <property type="term" value="C:bacterial nucleoid"/>
    <property type="evidence" value="ECO:0007669"/>
    <property type="project" value="TreeGrafter"/>
</dbReference>
<dbReference type="GO" id="GO:0006310">
    <property type="term" value="P:DNA recombination"/>
    <property type="evidence" value="ECO:0007669"/>
    <property type="project" value="UniProtKB-UniRule"/>
</dbReference>
<dbReference type="GO" id="GO:0006302">
    <property type="term" value="P:double-strand break repair"/>
    <property type="evidence" value="ECO:0007669"/>
    <property type="project" value="TreeGrafter"/>
</dbReference>
<dbReference type="FunFam" id="1.20.1440.120:FF:000001">
    <property type="entry name" value="DNA repair protein RecO"/>
    <property type="match status" value="1"/>
</dbReference>
<dbReference type="FunFam" id="2.40.50.140:FF:000074">
    <property type="entry name" value="DNA repair protein RecO"/>
    <property type="match status" value="1"/>
</dbReference>
<dbReference type="Gene3D" id="2.40.50.140">
    <property type="entry name" value="Nucleic acid-binding proteins"/>
    <property type="match status" value="1"/>
</dbReference>
<dbReference type="Gene3D" id="1.20.1440.120">
    <property type="entry name" value="Recombination protein O, C-terminal domain"/>
    <property type="match status" value="1"/>
</dbReference>
<dbReference type="HAMAP" id="MF_00201">
    <property type="entry name" value="RecO"/>
    <property type="match status" value="1"/>
</dbReference>
<dbReference type="InterPro" id="IPR037278">
    <property type="entry name" value="ARFGAP/RecO"/>
</dbReference>
<dbReference type="InterPro" id="IPR022572">
    <property type="entry name" value="DNA_rep/recomb_RecO_N"/>
</dbReference>
<dbReference type="InterPro" id="IPR012340">
    <property type="entry name" value="NA-bd_OB-fold"/>
</dbReference>
<dbReference type="InterPro" id="IPR003717">
    <property type="entry name" value="RecO"/>
</dbReference>
<dbReference type="InterPro" id="IPR042242">
    <property type="entry name" value="RecO_C"/>
</dbReference>
<dbReference type="NCBIfam" id="TIGR00613">
    <property type="entry name" value="reco"/>
    <property type="match status" value="1"/>
</dbReference>
<dbReference type="PANTHER" id="PTHR33991">
    <property type="entry name" value="DNA REPAIR PROTEIN RECO"/>
    <property type="match status" value="1"/>
</dbReference>
<dbReference type="PANTHER" id="PTHR33991:SF1">
    <property type="entry name" value="DNA REPAIR PROTEIN RECO"/>
    <property type="match status" value="1"/>
</dbReference>
<dbReference type="Pfam" id="PF02565">
    <property type="entry name" value="RecO_C"/>
    <property type="match status" value="1"/>
</dbReference>
<dbReference type="Pfam" id="PF11967">
    <property type="entry name" value="RecO_N"/>
    <property type="match status" value="1"/>
</dbReference>
<dbReference type="SUPFAM" id="SSF57863">
    <property type="entry name" value="ArfGap/RecO-like zinc finger"/>
    <property type="match status" value="1"/>
</dbReference>
<dbReference type="SUPFAM" id="SSF50249">
    <property type="entry name" value="Nucleic acid-binding proteins"/>
    <property type="match status" value="1"/>
</dbReference>
<evidence type="ECO:0000255" key="1">
    <source>
        <dbReference type="HAMAP-Rule" id="MF_00201"/>
    </source>
</evidence>
<feature type="chain" id="PRO_1000099378" description="DNA repair protein RecO">
    <location>
        <begin position="1"/>
        <end position="242"/>
    </location>
</feature>
<organism>
    <name type="scientific">Escherichia coli O157:H7 (strain EC4115 / EHEC)</name>
    <dbReference type="NCBI Taxonomy" id="444450"/>
    <lineage>
        <taxon>Bacteria</taxon>
        <taxon>Pseudomonadati</taxon>
        <taxon>Pseudomonadota</taxon>
        <taxon>Gammaproteobacteria</taxon>
        <taxon>Enterobacterales</taxon>
        <taxon>Enterobacteriaceae</taxon>
        <taxon>Escherichia</taxon>
    </lineage>
</organism>
<protein>
    <recommendedName>
        <fullName evidence="1">DNA repair protein RecO</fullName>
    </recommendedName>
    <alternativeName>
        <fullName evidence="1">Recombination protein O</fullName>
    </alternativeName>
</protein>
<gene>
    <name evidence="1" type="primary">recO</name>
    <name type="ordered locus">ECH74115_3801</name>
</gene>
<sequence>MEGWQRAFVLHSRPWSETSLMLDVFTEESGRVRLVAKGARSKRSTLKGALQPFTPLLLRFGGRGEVKTLRSAEAVSLALPLSGITLYSGLYINELLSRVLEYETRFSELFFDYLHCIQSLAGVTGTPEPALRRFELALLGHLGYGVNFTHCAGSGEPVDDTMTYRYREEKGFIASVVIDNKTFTGRQLKALNAREFPDADTLRAAKRFTRMALKPYLGGKPLKSRELFRQFMPKRTVKTHYE</sequence>
<keyword id="KW-0227">DNA damage</keyword>
<keyword id="KW-0233">DNA recombination</keyword>
<keyword id="KW-0234">DNA repair</keyword>